<proteinExistence type="evidence at transcript level"/>
<dbReference type="EMBL" id="BC061382">
    <property type="protein sequence ID" value="AAH61382.1"/>
    <property type="molecule type" value="mRNA"/>
</dbReference>
<dbReference type="RefSeq" id="NP_989115.1">
    <property type="nucleotide sequence ID" value="NM_203784.1"/>
</dbReference>
<dbReference type="RefSeq" id="XP_012827058.1">
    <property type="nucleotide sequence ID" value="XM_012971604.3"/>
</dbReference>
<dbReference type="RefSeq" id="XP_017945588.1">
    <property type="nucleotide sequence ID" value="XM_018090099.1"/>
</dbReference>
<dbReference type="SMR" id="Q6P848"/>
<dbReference type="FunCoup" id="Q6P848">
    <property type="interactions" value="1332"/>
</dbReference>
<dbReference type="STRING" id="8364.ENSXETP00000016646"/>
<dbReference type="PaxDb" id="8364-ENSXETP00000055099"/>
<dbReference type="DNASU" id="394720"/>
<dbReference type="GeneID" id="394720"/>
<dbReference type="KEGG" id="xtr:394720"/>
<dbReference type="AGR" id="Xenbase:XB-GENE-974542"/>
<dbReference type="CTD" id="22919"/>
<dbReference type="Xenbase" id="XB-GENE-974542">
    <property type="gene designation" value="mapre1"/>
</dbReference>
<dbReference type="eggNOG" id="KOG3000">
    <property type="taxonomic scope" value="Eukaryota"/>
</dbReference>
<dbReference type="HOGENOM" id="CLU_041744_1_1_1"/>
<dbReference type="InParanoid" id="Q6P848"/>
<dbReference type="OrthoDB" id="2119228at2759"/>
<dbReference type="TreeFam" id="TF313620"/>
<dbReference type="Reactome" id="R-XTR-141444">
    <property type="pathway name" value="Amplification of signal from unattached kinetochores via a MAD2 inhibitory signal"/>
</dbReference>
<dbReference type="Reactome" id="R-XTR-2467813">
    <property type="pathway name" value="Separation of Sister Chromatids"/>
</dbReference>
<dbReference type="Reactome" id="R-XTR-2500257">
    <property type="pathway name" value="Resolution of Sister Chromatid Cohesion"/>
</dbReference>
<dbReference type="Reactome" id="R-XTR-2565942">
    <property type="pathway name" value="Regulation of PLK1 Activity at G2/M Transition"/>
</dbReference>
<dbReference type="Reactome" id="R-XTR-380259">
    <property type="pathway name" value="Loss of Nlp from mitotic centrosomes"/>
</dbReference>
<dbReference type="Reactome" id="R-XTR-380270">
    <property type="pathway name" value="Recruitment of mitotic centrosome proteins and complexes"/>
</dbReference>
<dbReference type="Reactome" id="R-XTR-380320">
    <property type="pathway name" value="Recruitment of NuMA to mitotic centrosomes"/>
</dbReference>
<dbReference type="Reactome" id="R-XTR-5620912">
    <property type="pathway name" value="Anchoring of the basal body to the plasma membrane"/>
</dbReference>
<dbReference type="Reactome" id="R-XTR-5663220">
    <property type="pathway name" value="RHO GTPases Activate Formins"/>
</dbReference>
<dbReference type="Reactome" id="R-XTR-68877">
    <property type="pathway name" value="Mitotic Prometaphase"/>
</dbReference>
<dbReference type="Reactome" id="R-XTR-8852276">
    <property type="pathway name" value="The role of GTSE1 in G2/M progression after G2 checkpoint"/>
</dbReference>
<dbReference type="Reactome" id="R-XTR-8854518">
    <property type="pathway name" value="AURKA Activation by TPX2"/>
</dbReference>
<dbReference type="Reactome" id="R-XTR-9648025">
    <property type="pathway name" value="EML4 and NUDC in mitotic spindle formation"/>
</dbReference>
<dbReference type="Proteomes" id="UP000008143">
    <property type="component" value="Chromosome 10"/>
</dbReference>
<dbReference type="Bgee" id="ENSXETG00000006620">
    <property type="expression patterns" value="Expressed in neurula embryo and 18 other cell types or tissues"/>
</dbReference>
<dbReference type="ExpressionAtlas" id="Q6P848">
    <property type="expression patterns" value="baseline"/>
</dbReference>
<dbReference type="GO" id="GO:0005813">
    <property type="term" value="C:centrosome"/>
    <property type="evidence" value="ECO:0007669"/>
    <property type="project" value="UniProtKB-SubCell"/>
</dbReference>
<dbReference type="GO" id="GO:0030981">
    <property type="term" value="C:cortical microtubule cytoskeleton"/>
    <property type="evidence" value="ECO:0000250"/>
    <property type="project" value="UniProtKB"/>
</dbReference>
<dbReference type="GO" id="GO:0005794">
    <property type="term" value="C:Golgi apparatus"/>
    <property type="evidence" value="ECO:0007669"/>
    <property type="project" value="UniProtKB-SubCell"/>
</dbReference>
<dbReference type="GO" id="GO:0005874">
    <property type="term" value="C:microtubule"/>
    <property type="evidence" value="ECO:0000250"/>
    <property type="project" value="UniProtKB"/>
</dbReference>
<dbReference type="GO" id="GO:0097431">
    <property type="term" value="C:mitotic spindle pole"/>
    <property type="evidence" value="ECO:0000250"/>
    <property type="project" value="UniProtKB"/>
</dbReference>
<dbReference type="GO" id="GO:0051010">
    <property type="term" value="F:microtubule plus-end binding"/>
    <property type="evidence" value="ECO:0000250"/>
    <property type="project" value="UniProtKB"/>
</dbReference>
<dbReference type="GO" id="GO:0051315">
    <property type="term" value="P:attachment of mitotic spindle microtubules to kinetochore"/>
    <property type="evidence" value="ECO:0000250"/>
    <property type="project" value="UniProtKB"/>
</dbReference>
<dbReference type="GO" id="GO:0051301">
    <property type="term" value="P:cell division"/>
    <property type="evidence" value="ECO:0007669"/>
    <property type="project" value="UniProtKB-KW"/>
</dbReference>
<dbReference type="GO" id="GO:0000132">
    <property type="term" value="P:establishment of mitotic spindle orientation"/>
    <property type="evidence" value="ECO:0000250"/>
    <property type="project" value="UniProtKB"/>
</dbReference>
<dbReference type="GO" id="GO:0031115">
    <property type="term" value="P:negative regulation of microtubule polymerization"/>
    <property type="evidence" value="ECO:0000250"/>
    <property type="project" value="UniProtKB"/>
</dbReference>
<dbReference type="GO" id="GO:1902888">
    <property type="term" value="P:protein localization to astral microtubule"/>
    <property type="evidence" value="ECO:0000250"/>
    <property type="project" value="UniProtKB"/>
</dbReference>
<dbReference type="GO" id="GO:0035372">
    <property type="term" value="P:protein localization to microtubule"/>
    <property type="evidence" value="ECO:0000250"/>
    <property type="project" value="UniProtKB"/>
</dbReference>
<dbReference type="CDD" id="cd00014">
    <property type="entry name" value="CH_SF"/>
    <property type="match status" value="1"/>
</dbReference>
<dbReference type="FunFam" id="1.20.5.1430:FF:000001">
    <property type="entry name" value="microtubule-associated protein RP/EB family member 1"/>
    <property type="match status" value="1"/>
</dbReference>
<dbReference type="FunFam" id="1.10.418.10:FF:000007">
    <property type="entry name" value="Microtubule-associated protein, RP/EB family, member 2"/>
    <property type="match status" value="1"/>
</dbReference>
<dbReference type="Gene3D" id="1.20.5.1430">
    <property type="match status" value="1"/>
</dbReference>
<dbReference type="Gene3D" id="1.10.418.10">
    <property type="entry name" value="Calponin-like domain"/>
    <property type="match status" value="1"/>
</dbReference>
<dbReference type="InterPro" id="IPR001715">
    <property type="entry name" value="CH_dom"/>
</dbReference>
<dbReference type="InterPro" id="IPR036872">
    <property type="entry name" value="CH_dom_sf"/>
</dbReference>
<dbReference type="InterPro" id="IPR004953">
    <property type="entry name" value="EB1_C"/>
</dbReference>
<dbReference type="InterPro" id="IPR036133">
    <property type="entry name" value="EB1_C_sf"/>
</dbReference>
<dbReference type="InterPro" id="IPR027328">
    <property type="entry name" value="MAPRE"/>
</dbReference>
<dbReference type="PANTHER" id="PTHR10623">
    <property type="entry name" value="MICROTUBULE-ASSOCIATED PROTEIN RP/EB FAMILY MEMBER"/>
    <property type="match status" value="1"/>
</dbReference>
<dbReference type="Pfam" id="PF00307">
    <property type="entry name" value="CH"/>
    <property type="match status" value="1"/>
</dbReference>
<dbReference type="Pfam" id="PF03271">
    <property type="entry name" value="EB1"/>
    <property type="match status" value="1"/>
</dbReference>
<dbReference type="SUPFAM" id="SSF47576">
    <property type="entry name" value="Calponin-homology domain, CH-domain"/>
    <property type="match status" value="1"/>
</dbReference>
<dbReference type="SUPFAM" id="SSF140612">
    <property type="entry name" value="EB1 dimerisation domain-like"/>
    <property type="match status" value="1"/>
</dbReference>
<dbReference type="PROSITE" id="PS50021">
    <property type="entry name" value="CH"/>
    <property type="match status" value="1"/>
</dbReference>
<dbReference type="PROSITE" id="PS51230">
    <property type="entry name" value="EB1_C"/>
    <property type="match status" value="1"/>
</dbReference>
<comment type="function">
    <text evidence="1">Plus-end tracking protein (+TIP) that binds to the plus-end of microtubules and regulates the dynamics of the microtubule cytoskeleton. Promotes cytoplasmic microtubule nucleation and elongation. Involved in mitotic spindle positioning by stabilizing microtubules and promoting dynamic connection between astral microtubules and the cortex during mitotic chromosome segregation.</text>
</comment>
<comment type="subcellular location">
    <subcellularLocation>
        <location evidence="1">Cytoplasm</location>
        <location evidence="1">Cytoskeleton</location>
    </subcellularLocation>
    <subcellularLocation>
        <location evidence="1">Cytoplasm</location>
        <location evidence="1">Cytoskeleton</location>
        <location evidence="1">Microtubule organizing center</location>
        <location evidence="1">Centrosome</location>
    </subcellularLocation>
    <subcellularLocation>
        <location evidence="1">Golgi apparatus</location>
    </subcellularLocation>
    <subcellularLocation>
        <location evidence="1">Cytoplasm</location>
        <location evidence="1">Cytoskeleton</location>
        <location evidence="1">Spindle</location>
    </subcellularLocation>
    <subcellularLocation>
        <location evidence="1">Cytoplasm</location>
        <location evidence="1">Cytoskeleton</location>
        <location evidence="1">Spindle pole</location>
    </subcellularLocation>
</comment>
<comment type="similarity">
    <text evidence="5">Belongs to the MAPRE family.</text>
</comment>
<evidence type="ECO:0000250" key="1">
    <source>
        <dbReference type="UniProtKB" id="Q15691"/>
    </source>
</evidence>
<evidence type="ECO:0000255" key="2">
    <source>
        <dbReference type="PROSITE-ProRule" id="PRU00044"/>
    </source>
</evidence>
<evidence type="ECO:0000255" key="3">
    <source>
        <dbReference type="PROSITE-ProRule" id="PRU00576"/>
    </source>
</evidence>
<evidence type="ECO:0000256" key="4">
    <source>
        <dbReference type="SAM" id="MobiDB-lite"/>
    </source>
</evidence>
<evidence type="ECO:0000305" key="5"/>
<keyword id="KW-0131">Cell cycle</keyword>
<keyword id="KW-0132">Cell division</keyword>
<keyword id="KW-0963">Cytoplasm</keyword>
<keyword id="KW-0206">Cytoskeleton</keyword>
<keyword id="KW-0333">Golgi apparatus</keyword>
<keyword id="KW-0493">Microtubule</keyword>
<keyword id="KW-0498">Mitosis</keyword>
<keyword id="KW-1185">Reference proteome</keyword>
<name>MARE1_XENTR</name>
<feature type="chain" id="PRO_0000213420" description="Microtubule-associated protein RP/EB family member 1">
    <location>
        <begin position="1"/>
        <end position="269"/>
    </location>
</feature>
<feature type="domain" description="Calponin-homology (CH)" evidence="2">
    <location>
        <begin position="14"/>
        <end position="116"/>
    </location>
</feature>
<feature type="domain" description="EB1 C-terminal" evidence="3">
    <location>
        <begin position="186"/>
        <end position="256"/>
    </location>
</feature>
<feature type="region of interest" description="Disordered" evidence="4">
    <location>
        <begin position="168"/>
        <end position="190"/>
    </location>
</feature>
<sequence>MAVNVYSTSVTSDNLSRHDMLAWINESLQLNLTKIEQLCSGSVYCQFMDMLFPGSVVLKKVKFQAKLEHEYIQNFKVLQAGFKKMGVDKIIPVDKLVKGKFQDNFEFVQWFKKFFDANYDGKDYDPVAARQGQESAPVPVLAAPVLNKPKKPLGSGNTAPQRTVPVQRTAVSNKPPAQGISKKPATVGNGDDESAELIQQINVLKITVEDLEKERDFYFGKLRNIELICQENEGESDPVLQRIIEILYATDEGFVIPDEGAPPEDQEEY</sequence>
<gene>
    <name type="primary">mapre1</name>
</gene>
<accession>Q6P848</accession>
<protein>
    <recommendedName>
        <fullName>Microtubule-associated protein RP/EB family member 1</fullName>
    </recommendedName>
</protein>
<reference key="1">
    <citation type="submission" date="2003-11" db="EMBL/GenBank/DDBJ databases">
        <authorList>
            <consortium name="NIH - Xenopus Gene Collection (XGC) project"/>
        </authorList>
    </citation>
    <scope>NUCLEOTIDE SEQUENCE [LARGE SCALE MRNA]</scope>
    <source>
        <tissue>Embryo</tissue>
    </source>
</reference>
<organism>
    <name type="scientific">Xenopus tropicalis</name>
    <name type="common">Western clawed frog</name>
    <name type="synonym">Silurana tropicalis</name>
    <dbReference type="NCBI Taxonomy" id="8364"/>
    <lineage>
        <taxon>Eukaryota</taxon>
        <taxon>Metazoa</taxon>
        <taxon>Chordata</taxon>
        <taxon>Craniata</taxon>
        <taxon>Vertebrata</taxon>
        <taxon>Euteleostomi</taxon>
        <taxon>Amphibia</taxon>
        <taxon>Batrachia</taxon>
        <taxon>Anura</taxon>
        <taxon>Pipoidea</taxon>
        <taxon>Pipidae</taxon>
        <taxon>Xenopodinae</taxon>
        <taxon>Xenopus</taxon>
        <taxon>Silurana</taxon>
    </lineage>
</organism>